<sequence length="74" mass="8070">MSKECKICGKKPMVGNNVSHAHNVNKRRFNPNLQRVKALFDGQVRRIDVCTSCIKAGKVVKAPTMGQGKVTSAS</sequence>
<reference key="1">
    <citation type="journal article" date="2009" name="Environ. Microbiol.">
        <title>Genome sequence of Desulfobacterium autotrophicum HRM2, a marine sulfate reducer oxidizing organic carbon completely to carbon dioxide.</title>
        <authorList>
            <person name="Strittmatter A.W."/>
            <person name="Liesegang H."/>
            <person name="Rabus R."/>
            <person name="Decker I."/>
            <person name="Amann J."/>
            <person name="Andres S."/>
            <person name="Henne A."/>
            <person name="Fricke W.F."/>
            <person name="Martinez-Arias R."/>
            <person name="Bartels D."/>
            <person name="Goesmann A."/>
            <person name="Krause L."/>
            <person name="Puehler A."/>
            <person name="Klenk H.P."/>
            <person name="Richter M."/>
            <person name="Schuler M."/>
            <person name="Gloeckner F.O."/>
            <person name="Meyerdierks A."/>
            <person name="Gottschalk G."/>
            <person name="Amann R."/>
        </authorList>
    </citation>
    <scope>NUCLEOTIDE SEQUENCE [LARGE SCALE GENOMIC DNA]</scope>
    <source>
        <strain>ATCC 43914 / DSM 3382 / VKM B-1955 / HRM2</strain>
    </source>
</reference>
<accession>C0QM36</accession>
<keyword id="KW-1185">Reference proteome</keyword>
<keyword id="KW-0687">Ribonucleoprotein</keyword>
<keyword id="KW-0689">Ribosomal protein</keyword>
<name>RL28_DESAH</name>
<gene>
    <name evidence="1" type="primary">rpmB</name>
    <name type="ordered locus">HRM2_12300</name>
</gene>
<protein>
    <recommendedName>
        <fullName evidence="1">Large ribosomal subunit protein bL28</fullName>
    </recommendedName>
    <alternativeName>
        <fullName evidence="2">50S ribosomal protein L28</fullName>
    </alternativeName>
</protein>
<feature type="chain" id="PRO_1000205594" description="Large ribosomal subunit protein bL28">
    <location>
        <begin position="1"/>
        <end position="74"/>
    </location>
</feature>
<comment type="similarity">
    <text evidence="1">Belongs to the bacterial ribosomal protein bL28 family.</text>
</comment>
<evidence type="ECO:0000255" key="1">
    <source>
        <dbReference type="HAMAP-Rule" id="MF_00373"/>
    </source>
</evidence>
<evidence type="ECO:0000305" key="2"/>
<proteinExistence type="inferred from homology"/>
<organism>
    <name type="scientific">Desulforapulum autotrophicum (strain ATCC 43914 / DSM 3382 / VKM B-1955 / HRM2)</name>
    <name type="common">Desulfobacterium autotrophicum</name>
    <dbReference type="NCBI Taxonomy" id="177437"/>
    <lineage>
        <taxon>Bacteria</taxon>
        <taxon>Pseudomonadati</taxon>
        <taxon>Thermodesulfobacteriota</taxon>
        <taxon>Desulfobacteria</taxon>
        <taxon>Desulfobacterales</taxon>
        <taxon>Desulfobacteraceae</taxon>
        <taxon>Desulforapulum</taxon>
    </lineage>
</organism>
<dbReference type="EMBL" id="CP001087">
    <property type="protein sequence ID" value="ACN14342.1"/>
    <property type="molecule type" value="Genomic_DNA"/>
</dbReference>
<dbReference type="RefSeq" id="WP_015903131.1">
    <property type="nucleotide sequence ID" value="NC_012108.1"/>
</dbReference>
<dbReference type="SMR" id="C0QM36"/>
<dbReference type="STRING" id="177437.HRM2_12300"/>
<dbReference type="KEGG" id="dat:HRM2_12300"/>
<dbReference type="eggNOG" id="COG0227">
    <property type="taxonomic scope" value="Bacteria"/>
</dbReference>
<dbReference type="HOGENOM" id="CLU_064548_7_0_7"/>
<dbReference type="OrthoDB" id="9805609at2"/>
<dbReference type="Proteomes" id="UP000000442">
    <property type="component" value="Chromosome"/>
</dbReference>
<dbReference type="GO" id="GO:1990904">
    <property type="term" value="C:ribonucleoprotein complex"/>
    <property type="evidence" value="ECO:0007669"/>
    <property type="project" value="UniProtKB-KW"/>
</dbReference>
<dbReference type="GO" id="GO:0005840">
    <property type="term" value="C:ribosome"/>
    <property type="evidence" value="ECO:0007669"/>
    <property type="project" value="UniProtKB-KW"/>
</dbReference>
<dbReference type="GO" id="GO:0003735">
    <property type="term" value="F:structural constituent of ribosome"/>
    <property type="evidence" value="ECO:0007669"/>
    <property type="project" value="InterPro"/>
</dbReference>
<dbReference type="GO" id="GO:0006412">
    <property type="term" value="P:translation"/>
    <property type="evidence" value="ECO:0007669"/>
    <property type="project" value="UniProtKB-UniRule"/>
</dbReference>
<dbReference type="Gene3D" id="2.20.150.30">
    <property type="match status" value="1"/>
</dbReference>
<dbReference type="Gene3D" id="2.30.170.40">
    <property type="entry name" value="Ribosomal protein L28/L24"/>
    <property type="match status" value="1"/>
</dbReference>
<dbReference type="HAMAP" id="MF_00373">
    <property type="entry name" value="Ribosomal_bL28"/>
    <property type="match status" value="1"/>
</dbReference>
<dbReference type="InterPro" id="IPR050096">
    <property type="entry name" value="Bacterial_rp_bL28"/>
</dbReference>
<dbReference type="InterPro" id="IPR026569">
    <property type="entry name" value="Ribosomal_bL28"/>
</dbReference>
<dbReference type="InterPro" id="IPR034704">
    <property type="entry name" value="Ribosomal_bL28/bL31-like_sf"/>
</dbReference>
<dbReference type="InterPro" id="IPR001383">
    <property type="entry name" value="Ribosomal_bL28_bact-type"/>
</dbReference>
<dbReference type="InterPro" id="IPR037147">
    <property type="entry name" value="Ribosomal_bL28_sf"/>
</dbReference>
<dbReference type="NCBIfam" id="TIGR00009">
    <property type="entry name" value="L28"/>
    <property type="match status" value="1"/>
</dbReference>
<dbReference type="PANTHER" id="PTHR39080">
    <property type="entry name" value="50S RIBOSOMAL PROTEIN L28"/>
    <property type="match status" value="1"/>
</dbReference>
<dbReference type="PANTHER" id="PTHR39080:SF1">
    <property type="entry name" value="LARGE RIBOSOMAL SUBUNIT PROTEIN BL28A"/>
    <property type="match status" value="1"/>
</dbReference>
<dbReference type="Pfam" id="PF00830">
    <property type="entry name" value="Ribosomal_L28"/>
    <property type="match status" value="1"/>
</dbReference>
<dbReference type="SUPFAM" id="SSF143800">
    <property type="entry name" value="L28p-like"/>
    <property type="match status" value="1"/>
</dbReference>